<sequence length="235" mass="25002">MDSIRSIPTAIDVRQLGTVDYHIAWQLQRDLADARVAGGPDTLLLLQHPPVYTAGRRTQPHERPNPSLHGVPVVETDRGGKITWHGPGQLVGYPIIGLAEPLDVVNYVRRLEEALIKVCAELGLDTSRVNGRSGIWVPGSAGQPARKIAAIGVRVSRATTMHGFALNCQCDLDAFHAIVPCGISDAGVTSLSAELGRTVAVNDVRSAIAEAVNDALDGWLALSWLSTPASVTSTL</sequence>
<keyword id="KW-0012">Acyltransferase</keyword>
<keyword id="KW-0963">Cytoplasm</keyword>
<keyword id="KW-0808">Transferase</keyword>
<comment type="function">
    <text evidence="1">Catalyzes the transfer of endogenously produced octanoic acid from octanoyl-acyl-carrier-protein onto the lipoyl domains of lipoate-dependent enzymes. Lipoyl-ACP can also act as a substrate although octanoyl-ACP is likely to be the physiological substrate.</text>
</comment>
<comment type="catalytic activity">
    <reaction evidence="1">
        <text>octanoyl-[ACP] + L-lysyl-[protein] = N(6)-octanoyl-L-lysyl-[protein] + holo-[ACP] + H(+)</text>
        <dbReference type="Rhea" id="RHEA:17665"/>
        <dbReference type="Rhea" id="RHEA-COMP:9636"/>
        <dbReference type="Rhea" id="RHEA-COMP:9685"/>
        <dbReference type="Rhea" id="RHEA-COMP:9752"/>
        <dbReference type="Rhea" id="RHEA-COMP:9928"/>
        <dbReference type="ChEBI" id="CHEBI:15378"/>
        <dbReference type="ChEBI" id="CHEBI:29969"/>
        <dbReference type="ChEBI" id="CHEBI:64479"/>
        <dbReference type="ChEBI" id="CHEBI:78463"/>
        <dbReference type="ChEBI" id="CHEBI:78809"/>
        <dbReference type="EC" id="2.3.1.181"/>
    </reaction>
</comment>
<comment type="pathway">
    <text evidence="1">Protein modification; protein lipoylation via endogenous pathway; protein N(6)-(lipoyl)lysine from octanoyl-[acyl-carrier-protein]: step 1/2.</text>
</comment>
<comment type="subcellular location">
    <subcellularLocation>
        <location evidence="1">Cytoplasm</location>
    </subcellularLocation>
</comment>
<comment type="miscellaneous">
    <text evidence="1">In the reaction, the free carboxyl group of octanoic acid is attached via an amide linkage to the epsilon-amino group of a specific lysine residue of lipoyl domains of lipoate-dependent enzymes.</text>
</comment>
<comment type="similarity">
    <text evidence="1">Belongs to the LipB family.</text>
</comment>
<organism>
    <name type="scientific">Mycobacterium leprae (strain Br4923)</name>
    <dbReference type="NCBI Taxonomy" id="561304"/>
    <lineage>
        <taxon>Bacteria</taxon>
        <taxon>Bacillati</taxon>
        <taxon>Actinomycetota</taxon>
        <taxon>Actinomycetes</taxon>
        <taxon>Mycobacteriales</taxon>
        <taxon>Mycobacteriaceae</taxon>
        <taxon>Mycobacterium</taxon>
    </lineage>
</organism>
<accession>B8ZQK0</accession>
<feature type="chain" id="PRO_1000116550" description="Octanoyltransferase">
    <location>
        <begin position="1"/>
        <end position="235"/>
    </location>
</feature>
<feature type="domain" description="BPL/LPL catalytic" evidence="2">
    <location>
        <begin position="37"/>
        <end position="220"/>
    </location>
</feature>
<feature type="active site" description="Acyl-thioester intermediate" evidence="1">
    <location>
        <position position="181"/>
    </location>
</feature>
<feature type="binding site" evidence="1">
    <location>
        <begin position="78"/>
        <end position="85"/>
    </location>
    <ligand>
        <name>substrate</name>
    </ligand>
</feature>
<feature type="binding site" evidence="1">
    <location>
        <begin position="150"/>
        <end position="152"/>
    </location>
    <ligand>
        <name>substrate</name>
    </ligand>
</feature>
<feature type="binding site" evidence="1">
    <location>
        <begin position="163"/>
        <end position="165"/>
    </location>
    <ligand>
        <name>substrate</name>
    </ligand>
</feature>
<feature type="site" description="Lowers pKa of active site Cys" evidence="1">
    <location>
        <position position="147"/>
    </location>
</feature>
<name>LIPB_MYCLB</name>
<proteinExistence type="inferred from homology"/>
<evidence type="ECO:0000255" key="1">
    <source>
        <dbReference type="HAMAP-Rule" id="MF_00013"/>
    </source>
</evidence>
<evidence type="ECO:0000255" key="2">
    <source>
        <dbReference type="PROSITE-ProRule" id="PRU01067"/>
    </source>
</evidence>
<reference key="1">
    <citation type="journal article" date="2009" name="Nat. Genet.">
        <title>Comparative genomic and phylogeographic analysis of Mycobacterium leprae.</title>
        <authorList>
            <person name="Monot M."/>
            <person name="Honore N."/>
            <person name="Garnier T."/>
            <person name="Zidane N."/>
            <person name="Sherafi D."/>
            <person name="Paniz-Mondolfi A."/>
            <person name="Matsuoka M."/>
            <person name="Taylor G.M."/>
            <person name="Donoghue H.D."/>
            <person name="Bouwman A."/>
            <person name="Mays S."/>
            <person name="Watson C."/>
            <person name="Lockwood D."/>
            <person name="Khamispour A."/>
            <person name="Dowlati Y."/>
            <person name="Jianping S."/>
            <person name="Rea T.H."/>
            <person name="Vera-Cabrera L."/>
            <person name="Stefani M.M."/>
            <person name="Banu S."/>
            <person name="Macdonald M."/>
            <person name="Sapkota B.R."/>
            <person name="Spencer J.S."/>
            <person name="Thomas J."/>
            <person name="Harshman K."/>
            <person name="Singh P."/>
            <person name="Busso P."/>
            <person name="Gattiker A."/>
            <person name="Rougemont J."/>
            <person name="Brennan P.J."/>
            <person name="Cole S.T."/>
        </authorList>
    </citation>
    <scope>NUCLEOTIDE SEQUENCE [LARGE SCALE GENOMIC DNA]</scope>
    <source>
        <strain>Br4923</strain>
    </source>
</reference>
<dbReference type="EC" id="2.3.1.181" evidence="1"/>
<dbReference type="EMBL" id="FM211192">
    <property type="protein sequence ID" value="CAR70954.1"/>
    <property type="molecule type" value="Genomic_DNA"/>
</dbReference>
<dbReference type="SMR" id="B8ZQK0"/>
<dbReference type="KEGG" id="mlb:MLBr00859"/>
<dbReference type="HOGENOM" id="CLU_035168_2_1_11"/>
<dbReference type="UniPathway" id="UPA00538">
    <property type="reaction ID" value="UER00592"/>
</dbReference>
<dbReference type="Proteomes" id="UP000006900">
    <property type="component" value="Chromosome"/>
</dbReference>
<dbReference type="GO" id="GO:0005737">
    <property type="term" value="C:cytoplasm"/>
    <property type="evidence" value="ECO:0007669"/>
    <property type="project" value="UniProtKB-SubCell"/>
</dbReference>
<dbReference type="GO" id="GO:0033819">
    <property type="term" value="F:lipoyl(octanoyl) transferase activity"/>
    <property type="evidence" value="ECO:0007669"/>
    <property type="project" value="UniProtKB-EC"/>
</dbReference>
<dbReference type="GO" id="GO:0036211">
    <property type="term" value="P:protein modification process"/>
    <property type="evidence" value="ECO:0007669"/>
    <property type="project" value="InterPro"/>
</dbReference>
<dbReference type="CDD" id="cd16444">
    <property type="entry name" value="LipB"/>
    <property type="match status" value="1"/>
</dbReference>
<dbReference type="FunFam" id="3.30.930.10:FF:000035">
    <property type="entry name" value="Putative lipoyltransferase 2, mitochondrial"/>
    <property type="match status" value="1"/>
</dbReference>
<dbReference type="Gene3D" id="3.30.930.10">
    <property type="entry name" value="Bira Bifunctional Protein, Domain 2"/>
    <property type="match status" value="1"/>
</dbReference>
<dbReference type="HAMAP" id="MF_00013">
    <property type="entry name" value="LipB"/>
    <property type="match status" value="1"/>
</dbReference>
<dbReference type="InterPro" id="IPR045864">
    <property type="entry name" value="aa-tRNA-synth_II/BPL/LPL"/>
</dbReference>
<dbReference type="InterPro" id="IPR004143">
    <property type="entry name" value="BPL_LPL_catalytic"/>
</dbReference>
<dbReference type="InterPro" id="IPR000544">
    <property type="entry name" value="Octanoyltransferase"/>
</dbReference>
<dbReference type="InterPro" id="IPR020605">
    <property type="entry name" value="Octanoyltransferase_CS"/>
</dbReference>
<dbReference type="NCBIfam" id="TIGR00214">
    <property type="entry name" value="lipB"/>
    <property type="match status" value="1"/>
</dbReference>
<dbReference type="NCBIfam" id="NF010925">
    <property type="entry name" value="PRK14345.1"/>
    <property type="match status" value="1"/>
</dbReference>
<dbReference type="PANTHER" id="PTHR10993:SF7">
    <property type="entry name" value="LIPOYLTRANSFERASE 2, MITOCHONDRIAL-RELATED"/>
    <property type="match status" value="1"/>
</dbReference>
<dbReference type="PANTHER" id="PTHR10993">
    <property type="entry name" value="OCTANOYLTRANSFERASE"/>
    <property type="match status" value="1"/>
</dbReference>
<dbReference type="Pfam" id="PF21948">
    <property type="entry name" value="LplA-B_cat"/>
    <property type="match status" value="1"/>
</dbReference>
<dbReference type="PIRSF" id="PIRSF016262">
    <property type="entry name" value="LPLase"/>
    <property type="match status" value="1"/>
</dbReference>
<dbReference type="SUPFAM" id="SSF55681">
    <property type="entry name" value="Class II aaRS and biotin synthetases"/>
    <property type="match status" value="1"/>
</dbReference>
<dbReference type="PROSITE" id="PS51733">
    <property type="entry name" value="BPL_LPL_CATALYTIC"/>
    <property type="match status" value="1"/>
</dbReference>
<dbReference type="PROSITE" id="PS01313">
    <property type="entry name" value="LIPB"/>
    <property type="match status" value="1"/>
</dbReference>
<protein>
    <recommendedName>
        <fullName evidence="1">Octanoyltransferase</fullName>
        <ecNumber evidence="1">2.3.1.181</ecNumber>
    </recommendedName>
    <alternativeName>
        <fullName evidence="1">Lipoate-protein ligase B</fullName>
    </alternativeName>
    <alternativeName>
        <fullName evidence="1">Lipoyl/octanoyl transferase</fullName>
    </alternativeName>
    <alternativeName>
        <fullName evidence="1">Octanoyl-[acyl-carrier-protein]-protein N-octanoyltransferase</fullName>
    </alternativeName>
</protein>
<gene>
    <name evidence="1" type="primary">lipB</name>
    <name type="ordered locus">MLBr00859</name>
</gene>